<reference key="1">
    <citation type="journal article" date="2011" name="J. Bacteriol.">
        <title>Comparative genomics of 28 Salmonella enterica isolates: evidence for CRISPR-mediated adaptive sublineage evolution.</title>
        <authorList>
            <person name="Fricke W.F."/>
            <person name="Mammel M.K."/>
            <person name="McDermott P.F."/>
            <person name="Tartera C."/>
            <person name="White D.G."/>
            <person name="Leclerc J.E."/>
            <person name="Ravel J."/>
            <person name="Cebula T.A."/>
        </authorList>
    </citation>
    <scope>NUCLEOTIDE SEQUENCE [LARGE SCALE GENOMIC DNA]</scope>
    <source>
        <strain>CVM19633</strain>
    </source>
</reference>
<evidence type="ECO:0000255" key="1">
    <source>
        <dbReference type="HAMAP-Rule" id="MF_00476"/>
    </source>
</evidence>
<comment type="function">
    <text evidence="1">Transcriptional repressor of the nikABCDE operon. Is active in the presence of excessive concentrations of intracellular nickel.</text>
</comment>
<comment type="cofactor">
    <cofactor evidence="1">
        <name>Ni(2+)</name>
        <dbReference type="ChEBI" id="CHEBI:49786"/>
    </cofactor>
    <text evidence="1">Binds 1 nickel ion per subunit.</text>
</comment>
<comment type="subunit">
    <text evidence="1">Homotetramer.</text>
</comment>
<comment type="similarity">
    <text evidence="1">Belongs to the transcriptional regulatory CopG/NikR family.</text>
</comment>
<gene>
    <name evidence="1" type="primary">nikR</name>
    <name type="ordered locus">SeSA_A3776</name>
</gene>
<proteinExistence type="inferred from homology"/>
<feature type="chain" id="PRO_1000125841" description="Nickel-responsive regulator">
    <location>
        <begin position="1"/>
        <end position="133"/>
    </location>
</feature>
<feature type="binding site" evidence="1">
    <location>
        <position position="76"/>
    </location>
    <ligand>
        <name>Ni(2+)</name>
        <dbReference type="ChEBI" id="CHEBI:49786"/>
    </ligand>
</feature>
<feature type="binding site" evidence="1">
    <location>
        <position position="87"/>
    </location>
    <ligand>
        <name>Ni(2+)</name>
        <dbReference type="ChEBI" id="CHEBI:49786"/>
    </ligand>
</feature>
<feature type="binding site" evidence="1">
    <location>
        <position position="89"/>
    </location>
    <ligand>
        <name>Ni(2+)</name>
        <dbReference type="ChEBI" id="CHEBI:49786"/>
    </ligand>
</feature>
<feature type="binding site" evidence="1">
    <location>
        <position position="95"/>
    </location>
    <ligand>
        <name>Ni(2+)</name>
        <dbReference type="ChEBI" id="CHEBI:49786"/>
    </ligand>
</feature>
<organism>
    <name type="scientific">Salmonella schwarzengrund (strain CVM19633)</name>
    <dbReference type="NCBI Taxonomy" id="439843"/>
    <lineage>
        <taxon>Bacteria</taxon>
        <taxon>Pseudomonadati</taxon>
        <taxon>Pseudomonadota</taxon>
        <taxon>Gammaproteobacteria</taxon>
        <taxon>Enterobacterales</taxon>
        <taxon>Enterobacteriaceae</taxon>
        <taxon>Salmonella</taxon>
    </lineage>
</organism>
<keyword id="KW-0238">DNA-binding</keyword>
<keyword id="KW-0479">Metal-binding</keyword>
<keyword id="KW-0533">Nickel</keyword>
<keyword id="KW-0678">Repressor</keyword>
<keyword id="KW-0804">Transcription</keyword>
<keyword id="KW-0805">Transcription regulation</keyword>
<accession>B4TYY1</accession>
<protein>
    <recommendedName>
        <fullName evidence="1">Nickel-responsive regulator</fullName>
    </recommendedName>
</protein>
<dbReference type="EMBL" id="CP001127">
    <property type="protein sequence ID" value="ACF89627.1"/>
    <property type="molecule type" value="Genomic_DNA"/>
</dbReference>
<dbReference type="RefSeq" id="WP_001190057.1">
    <property type="nucleotide sequence ID" value="NC_011094.1"/>
</dbReference>
<dbReference type="SMR" id="B4TYY1"/>
<dbReference type="KEGG" id="sew:SeSA_A3776"/>
<dbReference type="HOGENOM" id="CLU_113319_1_4_6"/>
<dbReference type="Proteomes" id="UP000001865">
    <property type="component" value="Chromosome"/>
</dbReference>
<dbReference type="GO" id="GO:0003700">
    <property type="term" value="F:DNA-binding transcription factor activity"/>
    <property type="evidence" value="ECO:0007669"/>
    <property type="project" value="UniProtKB-UniRule"/>
</dbReference>
<dbReference type="GO" id="GO:0016151">
    <property type="term" value="F:nickel cation binding"/>
    <property type="evidence" value="ECO:0007669"/>
    <property type="project" value="UniProtKB-UniRule"/>
</dbReference>
<dbReference type="GO" id="GO:0043565">
    <property type="term" value="F:sequence-specific DNA binding"/>
    <property type="evidence" value="ECO:0007669"/>
    <property type="project" value="UniProtKB-ARBA"/>
</dbReference>
<dbReference type="GO" id="GO:0010045">
    <property type="term" value="P:response to nickel cation"/>
    <property type="evidence" value="ECO:0007669"/>
    <property type="project" value="InterPro"/>
</dbReference>
<dbReference type="CDD" id="cd22231">
    <property type="entry name" value="RHH_NikR_HicB-like"/>
    <property type="match status" value="1"/>
</dbReference>
<dbReference type="FunFam" id="1.10.1220.10:FF:000001">
    <property type="entry name" value="Nickel-responsive regulator"/>
    <property type="match status" value="1"/>
</dbReference>
<dbReference type="FunFam" id="3.30.70.1150:FF:000002">
    <property type="entry name" value="Nickel-responsive regulator"/>
    <property type="match status" value="1"/>
</dbReference>
<dbReference type="Gene3D" id="3.30.70.1150">
    <property type="entry name" value="ACT-like. Chain A, domain 2"/>
    <property type="match status" value="1"/>
</dbReference>
<dbReference type="Gene3D" id="1.10.1220.10">
    <property type="entry name" value="Met repressor-like"/>
    <property type="match status" value="1"/>
</dbReference>
<dbReference type="HAMAP" id="MF_00476">
    <property type="entry name" value="NikR"/>
    <property type="match status" value="1"/>
</dbReference>
<dbReference type="InterPro" id="IPR027271">
    <property type="entry name" value="Acetolactate_synth/TF_NikR_C"/>
</dbReference>
<dbReference type="InterPro" id="IPR045865">
    <property type="entry name" value="ACT-like_dom_sf"/>
</dbReference>
<dbReference type="InterPro" id="IPR013321">
    <property type="entry name" value="Arc_rbn_hlx_hlx"/>
</dbReference>
<dbReference type="InterPro" id="IPR002145">
    <property type="entry name" value="CopG"/>
</dbReference>
<dbReference type="InterPro" id="IPR050192">
    <property type="entry name" value="CopG/NikR_regulator"/>
</dbReference>
<dbReference type="InterPro" id="IPR022988">
    <property type="entry name" value="Ni_resp_reg_NikR"/>
</dbReference>
<dbReference type="InterPro" id="IPR014160">
    <property type="entry name" value="Nickel_NikR_proteobac"/>
</dbReference>
<dbReference type="InterPro" id="IPR010985">
    <property type="entry name" value="Ribbon_hlx_hlx"/>
</dbReference>
<dbReference type="InterPro" id="IPR014864">
    <property type="entry name" value="TF_NikR_Ni-bd_C"/>
</dbReference>
<dbReference type="NCBIfam" id="TIGR02793">
    <property type="entry name" value="nikR"/>
    <property type="match status" value="1"/>
</dbReference>
<dbReference type="NCBIfam" id="NF002815">
    <property type="entry name" value="PRK02967.1"/>
    <property type="match status" value="1"/>
</dbReference>
<dbReference type="NCBIfam" id="NF003381">
    <property type="entry name" value="PRK04460.1"/>
    <property type="match status" value="1"/>
</dbReference>
<dbReference type="PANTHER" id="PTHR34719">
    <property type="entry name" value="NICKEL-RESPONSIVE REGULATOR"/>
    <property type="match status" value="1"/>
</dbReference>
<dbReference type="PANTHER" id="PTHR34719:SF2">
    <property type="entry name" value="NICKEL-RESPONSIVE REGULATOR"/>
    <property type="match status" value="1"/>
</dbReference>
<dbReference type="Pfam" id="PF08753">
    <property type="entry name" value="NikR_C"/>
    <property type="match status" value="1"/>
</dbReference>
<dbReference type="Pfam" id="PF01402">
    <property type="entry name" value="RHH_1"/>
    <property type="match status" value="1"/>
</dbReference>
<dbReference type="SUPFAM" id="SSF55021">
    <property type="entry name" value="ACT-like"/>
    <property type="match status" value="1"/>
</dbReference>
<dbReference type="SUPFAM" id="SSF47598">
    <property type="entry name" value="Ribbon-helix-helix"/>
    <property type="match status" value="1"/>
</dbReference>
<sequence length="133" mass="15065">MQRVTITLDDDLLETLDSLSQRRGYNNRSEAIRDILRGALAQEATQEHGTQGFAVLSYVYEHEKRDLASRIVSTQHHHHDLSVATLHVHINHDDCLEIAVLKGDMGDVQHFADDVIAQRGVRHGHLQCLPKED</sequence>
<name>NIKR_SALSV</name>